<evidence type="ECO:0000250" key="1">
    <source>
        <dbReference type="UniProtKB" id="Q6PIX5"/>
    </source>
</evidence>
<evidence type="ECO:0000250" key="2">
    <source>
        <dbReference type="UniProtKB" id="Q96CC6"/>
    </source>
</evidence>
<evidence type="ECO:0000255" key="3"/>
<evidence type="ECO:0000256" key="4">
    <source>
        <dbReference type="SAM" id="MobiDB-lite"/>
    </source>
</evidence>
<evidence type="ECO:0000305" key="5"/>
<protein>
    <recommendedName>
        <fullName>Inactive rhomboid protein 1</fullName>
        <shortName>iRhom1</shortName>
    </recommendedName>
    <alternativeName>
        <fullName>Rhomboid family member 1</fullName>
    </alternativeName>
</protein>
<organism>
    <name type="scientific">Callithrix jacchus</name>
    <name type="common">White-tufted-ear marmoset</name>
    <dbReference type="NCBI Taxonomy" id="9483"/>
    <lineage>
        <taxon>Eukaryota</taxon>
        <taxon>Metazoa</taxon>
        <taxon>Chordata</taxon>
        <taxon>Craniata</taxon>
        <taxon>Vertebrata</taxon>
        <taxon>Euteleostomi</taxon>
        <taxon>Mammalia</taxon>
        <taxon>Eutheria</taxon>
        <taxon>Euarchontoglires</taxon>
        <taxon>Primates</taxon>
        <taxon>Haplorrhini</taxon>
        <taxon>Platyrrhini</taxon>
        <taxon>Cebidae</taxon>
        <taxon>Callitrichinae</taxon>
        <taxon>Callithrix</taxon>
        <taxon>Callithrix</taxon>
    </lineage>
</organism>
<sequence length="855" mass="97350">MSEARRDSTSSLQRKKPPWLKLDIPSAAPATAEEPSFLQPLRRQVFLRSVSMPAETAHISSPHYELRRPVLQRQTSITQTIRRGAADWFGVSKESDSTQKWQRKSIRHCSQRYGKLKPQVLRELDLPSQDNVSLTSTETPPPLYVGPCQLGMQKIIDPLARGRAFRVADDTAEGLSAPHTPVTPGAASLCSFSSSRSGFHRLPRRRKRESVAKMSFRAAAALMKGRSVRDGTLRRAQRRSFTPASFLEEDTTDFPDELDTSFFAREGILHEELSTYPDEVFESPSEAALKDWEKAPEQADLTGGALDRSELERSHLMLPLERGWRKQKEGAAAQQPKVRLRQEVVSTAGPRRGQRIAVPVRKLFAREKRPYGLGMVGRLTNRTYRKRIDSFVKRQIEDMDDHRPFFTYWLTFVHSLVTILAVCIYGIAPVGFSQHETVDSVLRNRGVYENVKYVQQENFWIGPSSEALIHLGAKFSPCMRQDPQVHSFIRAAREREKHSACCVRNDRSGCVQTSEEECSSTLAVWVKWPVHPSAPELAGHKRQFGSVCHQDPRVCDEPSSEDPHEWPEDITRWPICTKNSAGNHTNHPHMDCVITGRPCCIGTKGRCEITSREYCDFMRGYFHEEATLCSQVHCMDDVCGLLPFLNPEVPDQFYRLWLSLFLHAGILHCLVSICFQMTVLRDLEKLAGWHRIAIIYLLSGVTGNLASAIFLPYRAEVGPAGSQFGILACLFVELFQSWQILARPWRAFFKLLAVVLFLFTFGLLPWIDNFAHISGFISGLFLSFAFLPYISFGKFDLYRKRCQIIVFQVVFLGLLAGLVVLFYVYPVRCEWCEFLTCIPFTDKFCEKYELDAQLH</sequence>
<gene>
    <name type="primary">RHBDF1</name>
</gene>
<dbReference type="EMBL" id="DP000588">
    <property type="protein sequence ID" value="ABZ80332.1"/>
    <property type="molecule type" value="Genomic_DNA"/>
</dbReference>
<dbReference type="RefSeq" id="XP_035122183.1">
    <property type="nucleotide sequence ID" value="XM_035266292.2"/>
</dbReference>
<dbReference type="SMR" id="B0VX73"/>
<dbReference type="FunCoup" id="B0VX73">
    <property type="interactions" value="384"/>
</dbReference>
<dbReference type="STRING" id="9483.ENSCJAP00000024917"/>
<dbReference type="MEROPS" id="S54.952"/>
<dbReference type="GlyCosmos" id="B0VX73">
    <property type="glycosylation" value="1 site, No reported glycans"/>
</dbReference>
<dbReference type="GeneID" id="100399120"/>
<dbReference type="eggNOG" id="KOG2290">
    <property type="taxonomic scope" value="Eukaryota"/>
</dbReference>
<dbReference type="InParanoid" id="B0VX73"/>
<dbReference type="Proteomes" id="UP000008225">
    <property type="component" value="Unplaced"/>
</dbReference>
<dbReference type="GO" id="GO:0005789">
    <property type="term" value="C:endoplasmic reticulum membrane"/>
    <property type="evidence" value="ECO:0000250"/>
    <property type="project" value="UniProtKB"/>
</dbReference>
<dbReference type="GO" id="GO:0000139">
    <property type="term" value="C:Golgi membrane"/>
    <property type="evidence" value="ECO:0000250"/>
    <property type="project" value="UniProtKB"/>
</dbReference>
<dbReference type="GO" id="GO:0019838">
    <property type="term" value="F:growth factor binding"/>
    <property type="evidence" value="ECO:0007669"/>
    <property type="project" value="UniProtKB-KW"/>
</dbReference>
<dbReference type="GO" id="GO:0004252">
    <property type="term" value="F:serine-type endopeptidase activity"/>
    <property type="evidence" value="ECO:0007669"/>
    <property type="project" value="InterPro"/>
</dbReference>
<dbReference type="GO" id="GO:0016477">
    <property type="term" value="P:cell migration"/>
    <property type="evidence" value="ECO:0000250"/>
    <property type="project" value="UniProtKB"/>
</dbReference>
<dbReference type="GO" id="GO:0008283">
    <property type="term" value="P:cell population proliferation"/>
    <property type="evidence" value="ECO:0000250"/>
    <property type="project" value="UniProtKB"/>
</dbReference>
<dbReference type="GO" id="GO:0050709">
    <property type="term" value="P:negative regulation of protein secretion"/>
    <property type="evidence" value="ECO:0000250"/>
    <property type="project" value="UniProtKB"/>
</dbReference>
<dbReference type="GO" id="GO:0015031">
    <property type="term" value="P:protein transport"/>
    <property type="evidence" value="ECO:0007669"/>
    <property type="project" value="UniProtKB-KW"/>
</dbReference>
<dbReference type="GO" id="GO:0042058">
    <property type="term" value="P:regulation of epidermal growth factor receptor signaling pathway"/>
    <property type="evidence" value="ECO:0000250"/>
    <property type="project" value="UniProtKB"/>
</dbReference>
<dbReference type="GO" id="GO:0061136">
    <property type="term" value="P:regulation of proteasomal protein catabolic process"/>
    <property type="evidence" value="ECO:0000250"/>
    <property type="project" value="UniProtKB"/>
</dbReference>
<dbReference type="FunFam" id="1.20.1540.10:FF:000001">
    <property type="entry name" value="Putative inactive rhomboid protein 1"/>
    <property type="match status" value="1"/>
</dbReference>
<dbReference type="Gene3D" id="1.20.1540.10">
    <property type="entry name" value="Rhomboid-like"/>
    <property type="match status" value="1"/>
</dbReference>
<dbReference type="InterPro" id="IPR051512">
    <property type="entry name" value="Inactive_Rhomboid"/>
</dbReference>
<dbReference type="InterPro" id="IPR022241">
    <property type="entry name" value="iRhom1_2_N"/>
</dbReference>
<dbReference type="InterPro" id="IPR022764">
    <property type="entry name" value="Peptidase_S54_rhomboid_dom"/>
</dbReference>
<dbReference type="InterPro" id="IPR035952">
    <property type="entry name" value="Rhomboid-like_sf"/>
</dbReference>
<dbReference type="PANTHER" id="PTHR45965">
    <property type="entry name" value="INACTIVE RHOMBOID PROTEIN"/>
    <property type="match status" value="1"/>
</dbReference>
<dbReference type="PANTHER" id="PTHR45965:SF4">
    <property type="entry name" value="INACTIVE RHOMBOID PROTEIN 1"/>
    <property type="match status" value="1"/>
</dbReference>
<dbReference type="Pfam" id="PF12595">
    <property type="entry name" value="iRhom1-2_N"/>
    <property type="match status" value="1"/>
</dbReference>
<dbReference type="Pfam" id="PF01694">
    <property type="entry name" value="Rhomboid"/>
    <property type="match status" value="1"/>
</dbReference>
<dbReference type="SUPFAM" id="SSF144091">
    <property type="entry name" value="Rhomboid-like"/>
    <property type="match status" value="1"/>
</dbReference>
<feature type="chain" id="PRO_0000340106" description="Inactive rhomboid protein 1">
    <location>
        <begin position="1"/>
        <end position="855"/>
    </location>
</feature>
<feature type="topological domain" description="Cytoplasmic" evidence="3">
    <location>
        <begin position="1"/>
        <end position="411"/>
    </location>
</feature>
<feature type="transmembrane region" description="Helical" evidence="3">
    <location>
        <begin position="412"/>
        <end position="432"/>
    </location>
</feature>
<feature type="topological domain" description="Lumenal" evidence="3">
    <location>
        <begin position="433"/>
        <end position="655"/>
    </location>
</feature>
<feature type="transmembrane region" description="Helical" evidence="3">
    <location>
        <begin position="656"/>
        <end position="676"/>
    </location>
</feature>
<feature type="topological domain" description="Cytoplasmic" evidence="3">
    <location>
        <begin position="677"/>
        <end position="691"/>
    </location>
</feature>
<feature type="transmembrane region" description="Helical" evidence="3">
    <location>
        <begin position="692"/>
        <end position="712"/>
    </location>
</feature>
<feature type="topological domain" description="Lumenal" evidence="3">
    <location>
        <begin position="713"/>
        <end position="714"/>
    </location>
</feature>
<feature type="transmembrane region" description="Helical" evidence="3">
    <location>
        <begin position="715"/>
        <end position="735"/>
    </location>
</feature>
<feature type="topological domain" description="Cytoplasmic" evidence="3">
    <location>
        <begin position="736"/>
        <end position="746"/>
    </location>
</feature>
<feature type="transmembrane region" description="Helical" evidence="3">
    <location>
        <begin position="747"/>
        <end position="767"/>
    </location>
</feature>
<feature type="topological domain" description="Lumenal" evidence="3">
    <location>
        <begin position="768"/>
        <end position="772"/>
    </location>
</feature>
<feature type="transmembrane region" description="Helical" evidence="3">
    <location>
        <begin position="773"/>
        <end position="793"/>
    </location>
</feature>
<feature type="topological domain" description="Cytoplasmic" evidence="3">
    <location>
        <begin position="794"/>
        <end position="803"/>
    </location>
</feature>
<feature type="transmembrane region" description="Helical" evidence="3">
    <location>
        <begin position="804"/>
        <end position="824"/>
    </location>
</feature>
<feature type="topological domain" description="Lumenal" evidence="3">
    <location>
        <begin position="825"/>
        <end position="855"/>
    </location>
</feature>
<feature type="region of interest" description="Disordered" evidence="4">
    <location>
        <begin position="1"/>
        <end position="35"/>
    </location>
</feature>
<feature type="compositionally biased region" description="Low complexity" evidence="4">
    <location>
        <begin position="25"/>
        <end position="35"/>
    </location>
</feature>
<feature type="modified residue" description="Phosphoserine" evidence="2">
    <location>
        <position position="76"/>
    </location>
</feature>
<feature type="modified residue" description="Phosphoserine" evidence="1">
    <location>
        <position position="176"/>
    </location>
</feature>
<feature type="modified residue" description="Phosphothreonine" evidence="1">
    <location>
        <position position="180"/>
    </location>
</feature>
<feature type="modified residue" description="Phosphothreonine" evidence="1">
    <location>
        <position position="183"/>
    </location>
</feature>
<feature type="modified residue" description="Phosphoserine" evidence="2">
    <location>
        <position position="390"/>
    </location>
</feature>
<feature type="glycosylation site" description="N-linked (GlcNAc...) asparagine" evidence="3">
    <location>
        <position position="583"/>
    </location>
</feature>
<keyword id="KW-0256">Endoplasmic reticulum</keyword>
<keyword id="KW-0325">Glycoprotein</keyword>
<keyword id="KW-0333">Golgi apparatus</keyword>
<keyword id="KW-0340">Growth factor binding</keyword>
<keyword id="KW-0472">Membrane</keyword>
<keyword id="KW-0597">Phosphoprotein</keyword>
<keyword id="KW-0653">Protein transport</keyword>
<keyword id="KW-1185">Reference proteome</keyword>
<keyword id="KW-0812">Transmembrane</keyword>
<keyword id="KW-1133">Transmembrane helix</keyword>
<keyword id="KW-0813">Transport</keyword>
<accession>B0VX73</accession>
<proteinExistence type="inferred from homology"/>
<comment type="function">
    <text evidence="2">Regulates ADAM17 protease, a sheddase of the epidermal growth factor (EGF) receptor ligands and TNF, thereby plays a role in sleep, cell survival, proliferation, migration and inflammation. Does not exhibit any protease activity on its own.</text>
</comment>
<comment type="subunit">
    <text evidence="2">Homodimer, or homooligomer. Interacts with TGFA and HBEGF. Interacts with EGF; may retain EGF in the endoplasmic reticulum and regulates its degradation through the endoplasmic reticulum-associated degradation (ERAD). Interacts (via cytoplasmic N-terminus) with FRMD8/iTAP; this interaction leads to mutual protein stabilization. Interacts with ADAM17/TACE.</text>
</comment>
<comment type="subcellular location">
    <subcellularLocation>
        <location evidence="2">Endoplasmic reticulum membrane</location>
        <topology evidence="3">Multi-pass membrane protein</topology>
    </subcellularLocation>
    <subcellularLocation>
        <location evidence="2">Golgi apparatus membrane</location>
        <topology evidence="3">Multi-pass membrane protein</topology>
    </subcellularLocation>
    <text evidence="2">Predominantly localized in the endoplasmic reticulum membrane.</text>
</comment>
<comment type="similarity">
    <text evidence="5">Belongs to the peptidase S54 family.</text>
</comment>
<reference key="1">
    <citation type="submission" date="2008-02" db="EMBL/GenBank/DDBJ databases">
        <title>NISC comparative sequencing initiative.</title>
        <authorList>
            <person name="Antonellis A."/>
            <person name="Benjamin B."/>
            <person name="Blakesley R.W."/>
            <person name="Bouffard G.G."/>
            <person name="Brinkley C."/>
            <person name="Brooks S."/>
            <person name="Chu G."/>
            <person name="Chub I."/>
            <person name="Coleman H."/>
            <person name="Fuksenko T."/>
            <person name="Gestole M."/>
            <person name="Gregory M."/>
            <person name="Guan X."/>
            <person name="Gupta J."/>
            <person name="Gurson N."/>
            <person name="Han E."/>
            <person name="Han J."/>
            <person name="Hansen N."/>
            <person name="Hargrove A."/>
            <person name="Hines-Harris K."/>
            <person name="Ho S.-L."/>
            <person name="Hu P."/>
            <person name="Hunter G."/>
            <person name="Hurle B."/>
            <person name="Idol J.R."/>
            <person name="Johnson T."/>
            <person name="Knight E."/>
            <person name="Kwong P."/>
            <person name="Lee-Lin S.-Q."/>
            <person name="Legaspi R."/>
            <person name="Madden M."/>
            <person name="Maduro Q.L."/>
            <person name="Maduro V.B."/>
            <person name="Margulies E.H."/>
            <person name="Masiello C."/>
            <person name="Maskeri B."/>
            <person name="McDowell J."/>
            <person name="Merkulov G."/>
            <person name="Montemayor C."/>
            <person name="Mullikin J.C."/>
            <person name="Park M."/>
            <person name="Prasad A."/>
            <person name="Ramsahoye C."/>
            <person name="Reddix-Dugue N."/>
            <person name="Riebow N."/>
            <person name="Schandler K."/>
            <person name="Schueler M.G."/>
            <person name="Sison C."/>
            <person name="Smith L."/>
            <person name="Stantripop S."/>
            <person name="Thomas J.W."/>
            <person name="Thomas P.J."/>
            <person name="Tsipouri V."/>
            <person name="Young A."/>
            <person name="Green E.D."/>
        </authorList>
    </citation>
    <scope>NUCLEOTIDE SEQUENCE [LARGE SCALE GENOMIC DNA]</scope>
</reference>
<name>RHDF1_CALJA</name>